<evidence type="ECO:0000255" key="1">
    <source>
        <dbReference type="HAMAP-Rule" id="MF_01849"/>
    </source>
</evidence>
<evidence type="ECO:0000255" key="2">
    <source>
        <dbReference type="PROSITE-ProRule" id="PRU01266"/>
    </source>
</evidence>
<dbReference type="EC" id="2.1.1.192" evidence="1"/>
<dbReference type="EMBL" id="CP000627">
    <property type="protein sequence ID" value="ABQ21728.1"/>
    <property type="molecule type" value="Genomic_DNA"/>
</dbReference>
<dbReference type="EMBL" id="CP001235">
    <property type="protein sequence ID" value="ACP08791.1"/>
    <property type="molecule type" value="Genomic_DNA"/>
</dbReference>
<dbReference type="RefSeq" id="WP_000206078.1">
    <property type="nucleotide sequence ID" value="NZ_JAACZH010000017.1"/>
</dbReference>
<dbReference type="SMR" id="A5F3F8"/>
<dbReference type="KEGG" id="vco:VC0395_A0286"/>
<dbReference type="KEGG" id="vcr:VC395_0774"/>
<dbReference type="PATRIC" id="fig|345073.21.peg.748"/>
<dbReference type="eggNOG" id="COG0820">
    <property type="taxonomic scope" value="Bacteria"/>
</dbReference>
<dbReference type="HOGENOM" id="CLU_029101_0_0_6"/>
<dbReference type="OrthoDB" id="9793973at2"/>
<dbReference type="Proteomes" id="UP000000249">
    <property type="component" value="Chromosome 2"/>
</dbReference>
<dbReference type="GO" id="GO:0005737">
    <property type="term" value="C:cytoplasm"/>
    <property type="evidence" value="ECO:0007669"/>
    <property type="project" value="UniProtKB-SubCell"/>
</dbReference>
<dbReference type="GO" id="GO:0051539">
    <property type="term" value="F:4 iron, 4 sulfur cluster binding"/>
    <property type="evidence" value="ECO:0007669"/>
    <property type="project" value="UniProtKB-UniRule"/>
</dbReference>
<dbReference type="GO" id="GO:0046872">
    <property type="term" value="F:metal ion binding"/>
    <property type="evidence" value="ECO:0007669"/>
    <property type="project" value="UniProtKB-KW"/>
</dbReference>
<dbReference type="GO" id="GO:0070040">
    <property type="term" value="F:rRNA (adenine(2503)-C2-)-methyltransferase activity"/>
    <property type="evidence" value="ECO:0007669"/>
    <property type="project" value="UniProtKB-UniRule"/>
</dbReference>
<dbReference type="GO" id="GO:0019843">
    <property type="term" value="F:rRNA binding"/>
    <property type="evidence" value="ECO:0007669"/>
    <property type="project" value="UniProtKB-UniRule"/>
</dbReference>
<dbReference type="GO" id="GO:0002935">
    <property type="term" value="F:tRNA (adenine(37)-C2)-methyltransferase activity"/>
    <property type="evidence" value="ECO:0007669"/>
    <property type="project" value="UniProtKB-UniRule"/>
</dbReference>
<dbReference type="GO" id="GO:0000049">
    <property type="term" value="F:tRNA binding"/>
    <property type="evidence" value="ECO:0007669"/>
    <property type="project" value="UniProtKB-UniRule"/>
</dbReference>
<dbReference type="GO" id="GO:0070475">
    <property type="term" value="P:rRNA base methylation"/>
    <property type="evidence" value="ECO:0007669"/>
    <property type="project" value="UniProtKB-UniRule"/>
</dbReference>
<dbReference type="GO" id="GO:0030488">
    <property type="term" value="P:tRNA methylation"/>
    <property type="evidence" value="ECO:0007669"/>
    <property type="project" value="UniProtKB-UniRule"/>
</dbReference>
<dbReference type="CDD" id="cd01335">
    <property type="entry name" value="Radical_SAM"/>
    <property type="match status" value="1"/>
</dbReference>
<dbReference type="FunFam" id="1.10.150.530:FF:000003">
    <property type="entry name" value="Dual-specificity RNA methyltransferase RlmN"/>
    <property type="match status" value="1"/>
</dbReference>
<dbReference type="FunFam" id="3.20.20.70:FF:000008">
    <property type="entry name" value="Dual-specificity RNA methyltransferase RlmN"/>
    <property type="match status" value="1"/>
</dbReference>
<dbReference type="Gene3D" id="1.10.150.530">
    <property type="match status" value="1"/>
</dbReference>
<dbReference type="Gene3D" id="3.20.20.70">
    <property type="entry name" value="Aldolase class I"/>
    <property type="match status" value="1"/>
</dbReference>
<dbReference type="HAMAP" id="MF_01849">
    <property type="entry name" value="RNA_methyltr_RlmN"/>
    <property type="match status" value="1"/>
</dbReference>
<dbReference type="InterPro" id="IPR013785">
    <property type="entry name" value="Aldolase_TIM"/>
</dbReference>
<dbReference type="InterPro" id="IPR040072">
    <property type="entry name" value="Methyltransferase_A"/>
</dbReference>
<dbReference type="InterPro" id="IPR048641">
    <property type="entry name" value="RlmN_N"/>
</dbReference>
<dbReference type="InterPro" id="IPR027492">
    <property type="entry name" value="RNA_MTrfase_RlmN"/>
</dbReference>
<dbReference type="InterPro" id="IPR004383">
    <property type="entry name" value="rRNA_lsu_MTrfase_RlmN/Cfr"/>
</dbReference>
<dbReference type="InterPro" id="IPR007197">
    <property type="entry name" value="rSAM"/>
</dbReference>
<dbReference type="NCBIfam" id="NF008396">
    <property type="entry name" value="PRK11194.1"/>
    <property type="match status" value="1"/>
</dbReference>
<dbReference type="NCBIfam" id="TIGR00048">
    <property type="entry name" value="rRNA_mod_RlmN"/>
    <property type="match status" value="1"/>
</dbReference>
<dbReference type="PANTHER" id="PTHR30544">
    <property type="entry name" value="23S RRNA METHYLTRANSFERASE"/>
    <property type="match status" value="1"/>
</dbReference>
<dbReference type="PANTHER" id="PTHR30544:SF5">
    <property type="entry name" value="RADICAL SAM CORE DOMAIN-CONTAINING PROTEIN"/>
    <property type="match status" value="1"/>
</dbReference>
<dbReference type="Pfam" id="PF04055">
    <property type="entry name" value="Radical_SAM"/>
    <property type="match status" value="1"/>
</dbReference>
<dbReference type="Pfam" id="PF21016">
    <property type="entry name" value="RlmN_N"/>
    <property type="match status" value="1"/>
</dbReference>
<dbReference type="PIRSF" id="PIRSF006004">
    <property type="entry name" value="CHP00048"/>
    <property type="match status" value="1"/>
</dbReference>
<dbReference type="SFLD" id="SFLDF00275">
    <property type="entry name" value="adenosine_C2_methyltransferase"/>
    <property type="match status" value="1"/>
</dbReference>
<dbReference type="SFLD" id="SFLDG01062">
    <property type="entry name" value="methyltransferase_(Class_A)"/>
    <property type="match status" value="1"/>
</dbReference>
<dbReference type="SUPFAM" id="SSF102114">
    <property type="entry name" value="Radical SAM enzymes"/>
    <property type="match status" value="1"/>
</dbReference>
<dbReference type="PROSITE" id="PS51918">
    <property type="entry name" value="RADICAL_SAM"/>
    <property type="match status" value="1"/>
</dbReference>
<sequence>MTTEKVNLLDFDRKGLRTFFAEELGEKAFRAEQVMKWIYHFGCDDFDQMNNINKQLREKLKAKCEIRAPYVSEAQHSADGTIKWAMRVGDQDVETVYIPEDDRATLCVSSQVGCALECKFCSTAQQGFNRNLRVSEIIGQVWRAAREIGLEKETGRRPITNVVMMGMGEPLLNMKNLIPALEIMLDDLGFGLSKRRVTVSTSGVVSGLEQMIGQIDVALAISLHAPNDKLRSEIMPINDRWNIEAFLEVVRRYIASSNANRGKVTVEYVLLDHVNDGTEHAHELAELLKRTPCKINLIPFNPYPGSPYKKPSNSRIDRFQKTLMQYEHTVTIRKTRGDDIDAACGQLVGDVIDRTKRTKAKQFDGQAIPVKTL</sequence>
<comment type="function">
    <text evidence="1">Specifically methylates position 2 of adenine 2503 in 23S rRNA and position 2 of adenine 37 in tRNAs. m2A2503 modification seems to play a crucial role in the proofreading step occurring at the peptidyl transferase center and thus would serve to optimize ribosomal fidelity.</text>
</comment>
<comment type="catalytic activity">
    <reaction evidence="1">
        <text>adenosine(2503) in 23S rRNA + 2 reduced [2Fe-2S]-[ferredoxin] + 2 S-adenosyl-L-methionine = 2-methyladenosine(2503) in 23S rRNA + 5'-deoxyadenosine + L-methionine + 2 oxidized [2Fe-2S]-[ferredoxin] + S-adenosyl-L-homocysteine</text>
        <dbReference type="Rhea" id="RHEA:42916"/>
        <dbReference type="Rhea" id="RHEA-COMP:10000"/>
        <dbReference type="Rhea" id="RHEA-COMP:10001"/>
        <dbReference type="Rhea" id="RHEA-COMP:10152"/>
        <dbReference type="Rhea" id="RHEA-COMP:10282"/>
        <dbReference type="ChEBI" id="CHEBI:17319"/>
        <dbReference type="ChEBI" id="CHEBI:33737"/>
        <dbReference type="ChEBI" id="CHEBI:33738"/>
        <dbReference type="ChEBI" id="CHEBI:57844"/>
        <dbReference type="ChEBI" id="CHEBI:57856"/>
        <dbReference type="ChEBI" id="CHEBI:59789"/>
        <dbReference type="ChEBI" id="CHEBI:74411"/>
        <dbReference type="ChEBI" id="CHEBI:74497"/>
        <dbReference type="EC" id="2.1.1.192"/>
    </reaction>
</comment>
<comment type="catalytic activity">
    <reaction evidence="1">
        <text>adenosine(37) in tRNA + 2 reduced [2Fe-2S]-[ferredoxin] + 2 S-adenosyl-L-methionine = 2-methyladenosine(37) in tRNA + 5'-deoxyadenosine + L-methionine + 2 oxidized [2Fe-2S]-[ferredoxin] + S-adenosyl-L-homocysteine</text>
        <dbReference type="Rhea" id="RHEA:43332"/>
        <dbReference type="Rhea" id="RHEA-COMP:10000"/>
        <dbReference type="Rhea" id="RHEA-COMP:10001"/>
        <dbReference type="Rhea" id="RHEA-COMP:10162"/>
        <dbReference type="Rhea" id="RHEA-COMP:10485"/>
        <dbReference type="ChEBI" id="CHEBI:17319"/>
        <dbReference type="ChEBI" id="CHEBI:33737"/>
        <dbReference type="ChEBI" id="CHEBI:33738"/>
        <dbReference type="ChEBI" id="CHEBI:57844"/>
        <dbReference type="ChEBI" id="CHEBI:57856"/>
        <dbReference type="ChEBI" id="CHEBI:59789"/>
        <dbReference type="ChEBI" id="CHEBI:74411"/>
        <dbReference type="ChEBI" id="CHEBI:74497"/>
        <dbReference type="EC" id="2.1.1.192"/>
    </reaction>
</comment>
<comment type="cofactor">
    <cofactor evidence="1">
        <name>[4Fe-4S] cluster</name>
        <dbReference type="ChEBI" id="CHEBI:49883"/>
    </cofactor>
    <text evidence="1">Binds 1 [4Fe-4S] cluster. The cluster is coordinated with 3 cysteines and an exchangeable S-adenosyl-L-methionine.</text>
</comment>
<comment type="subcellular location">
    <subcellularLocation>
        <location evidence="1">Cytoplasm</location>
    </subcellularLocation>
</comment>
<comment type="miscellaneous">
    <text evidence="1">Reaction proceeds by a ping-pong mechanism involving intermediate methylation of a conserved cysteine residue.</text>
</comment>
<comment type="similarity">
    <text evidence="1">Belongs to the radical SAM superfamily. RlmN family.</text>
</comment>
<reference key="1">
    <citation type="submission" date="2007-03" db="EMBL/GenBank/DDBJ databases">
        <authorList>
            <person name="Heidelberg J."/>
        </authorList>
    </citation>
    <scope>NUCLEOTIDE SEQUENCE [LARGE SCALE GENOMIC DNA]</scope>
    <source>
        <strain>ATCC 39541 / Classical Ogawa 395 / O395</strain>
    </source>
</reference>
<reference key="2">
    <citation type="journal article" date="2008" name="PLoS ONE">
        <title>A recalibrated molecular clock and independent origins for the cholera pandemic clones.</title>
        <authorList>
            <person name="Feng L."/>
            <person name="Reeves P.R."/>
            <person name="Lan R."/>
            <person name="Ren Y."/>
            <person name="Gao C."/>
            <person name="Zhou Z."/>
            <person name="Ren Y."/>
            <person name="Cheng J."/>
            <person name="Wang W."/>
            <person name="Wang J."/>
            <person name="Qian W."/>
            <person name="Li D."/>
            <person name="Wang L."/>
        </authorList>
    </citation>
    <scope>NUCLEOTIDE SEQUENCE [LARGE SCALE GENOMIC DNA]</scope>
    <source>
        <strain>ATCC 39541 / Classical Ogawa 395 / O395</strain>
    </source>
</reference>
<feature type="chain" id="PRO_0000350516" description="Dual-specificity RNA methyltransferase RlmN">
    <location>
        <begin position="1"/>
        <end position="373"/>
    </location>
</feature>
<feature type="domain" description="Radical SAM core" evidence="2">
    <location>
        <begin position="100"/>
        <end position="339"/>
    </location>
</feature>
<feature type="active site" description="Proton acceptor" evidence="1">
    <location>
        <position position="94"/>
    </location>
</feature>
<feature type="active site" description="S-methylcysteine intermediate" evidence="1">
    <location>
        <position position="344"/>
    </location>
</feature>
<feature type="binding site" evidence="1">
    <location>
        <position position="114"/>
    </location>
    <ligand>
        <name>[4Fe-4S] cluster</name>
        <dbReference type="ChEBI" id="CHEBI:49883"/>
        <note>4Fe-4S-S-AdoMet</note>
    </ligand>
</feature>
<feature type="binding site" evidence="1">
    <location>
        <position position="118"/>
    </location>
    <ligand>
        <name>[4Fe-4S] cluster</name>
        <dbReference type="ChEBI" id="CHEBI:49883"/>
        <note>4Fe-4S-S-AdoMet</note>
    </ligand>
</feature>
<feature type="binding site" evidence="1">
    <location>
        <position position="121"/>
    </location>
    <ligand>
        <name>[4Fe-4S] cluster</name>
        <dbReference type="ChEBI" id="CHEBI:49883"/>
        <note>4Fe-4S-S-AdoMet</note>
    </ligand>
</feature>
<feature type="binding site" evidence="1">
    <location>
        <begin position="168"/>
        <end position="169"/>
    </location>
    <ligand>
        <name>S-adenosyl-L-methionine</name>
        <dbReference type="ChEBI" id="CHEBI:59789"/>
    </ligand>
</feature>
<feature type="binding site" evidence="1">
    <location>
        <position position="200"/>
    </location>
    <ligand>
        <name>S-adenosyl-L-methionine</name>
        <dbReference type="ChEBI" id="CHEBI:59789"/>
    </ligand>
</feature>
<feature type="binding site" evidence="1">
    <location>
        <begin position="222"/>
        <end position="224"/>
    </location>
    <ligand>
        <name>S-adenosyl-L-methionine</name>
        <dbReference type="ChEBI" id="CHEBI:59789"/>
    </ligand>
</feature>
<feature type="binding site" evidence="1">
    <location>
        <position position="301"/>
    </location>
    <ligand>
        <name>S-adenosyl-L-methionine</name>
        <dbReference type="ChEBI" id="CHEBI:59789"/>
    </ligand>
</feature>
<feature type="disulfide bond" description="(transient)" evidence="1">
    <location>
        <begin position="107"/>
        <end position="344"/>
    </location>
</feature>
<organism>
    <name type="scientific">Vibrio cholerae serotype O1 (strain ATCC 39541 / Classical Ogawa 395 / O395)</name>
    <dbReference type="NCBI Taxonomy" id="345073"/>
    <lineage>
        <taxon>Bacteria</taxon>
        <taxon>Pseudomonadati</taxon>
        <taxon>Pseudomonadota</taxon>
        <taxon>Gammaproteobacteria</taxon>
        <taxon>Vibrionales</taxon>
        <taxon>Vibrionaceae</taxon>
        <taxon>Vibrio</taxon>
    </lineage>
</organism>
<proteinExistence type="inferred from homology"/>
<gene>
    <name evidence="1" type="primary">rlmN</name>
    <name type="ordered locus">VC0395_A0286</name>
    <name type="ordered locus">VC395_0774</name>
</gene>
<keyword id="KW-0004">4Fe-4S</keyword>
<keyword id="KW-0963">Cytoplasm</keyword>
<keyword id="KW-1015">Disulfide bond</keyword>
<keyword id="KW-0408">Iron</keyword>
<keyword id="KW-0411">Iron-sulfur</keyword>
<keyword id="KW-0479">Metal-binding</keyword>
<keyword id="KW-0489">Methyltransferase</keyword>
<keyword id="KW-0698">rRNA processing</keyword>
<keyword id="KW-0949">S-adenosyl-L-methionine</keyword>
<keyword id="KW-0808">Transferase</keyword>
<keyword id="KW-0819">tRNA processing</keyword>
<name>RLMN_VIBC3</name>
<accession>A5F3F8</accession>
<accession>C3LY67</accession>
<protein>
    <recommendedName>
        <fullName evidence="1">Dual-specificity RNA methyltransferase RlmN</fullName>
        <ecNumber evidence="1">2.1.1.192</ecNumber>
    </recommendedName>
    <alternativeName>
        <fullName evidence="1">23S rRNA (adenine(2503)-C(2))-methyltransferase</fullName>
    </alternativeName>
    <alternativeName>
        <fullName evidence="1">23S rRNA m2A2503 methyltransferase</fullName>
    </alternativeName>
    <alternativeName>
        <fullName evidence="1">Ribosomal RNA large subunit methyltransferase N</fullName>
    </alternativeName>
    <alternativeName>
        <fullName evidence="1">tRNA (adenine(37)-C(2))-methyltransferase</fullName>
    </alternativeName>
    <alternativeName>
        <fullName evidence="1">tRNA m2A37 methyltransferase</fullName>
    </alternativeName>
</protein>